<name>FENR_STRGR</name>
<organism>
    <name type="scientific">Streptomyces griseus</name>
    <dbReference type="NCBI Taxonomy" id="1911"/>
    <lineage>
        <taxon>Bacteria</taxon>
        <taxon>Bacillati</taxon>
        <taxon>Actinomycetota</taxon>
        <taxon>Actinomycetes</taxon>
        <taxon>Kitasatosporales</taxon>
        <taxon>Streptomycetaceae</taxon>
        <taxon>Streptomyces</taxon>
    </lineage>
</organism>
<dbReference type="EC" id="1.18.1.3"/>
<dbReference type="PIR" id="A44897">
    <property type="entry name" value="A44897"/>
</dbReference>
<dbReference type="GO" id="GO:0008860">
    <property type="term" value="F:ferredoxin-NAD+ reductase activity"/>
    <property type="evidence" value="ECO:0007669"/>
    <property type="project" value="UniProtKB-EC"/>
</dbReference>
<protein>
    <recommendedName>
        <fullName>Ferredoxin--NAD(+) reductase</fullName>
        <ecNumber>1.18.1.3</ecNumber>
    </recommendedName>
</protein>
<accession>P24134</accession>
<comment type="function">
    <text>Couples electron transfer from NADH to cytochrome P450(soy) in the presence of ferredoxin.</text>
</comment>
<comment type="catalytic activity">
    <reaction>
        <text>2 reduced [2Fe-2S]-[ferredoxin] + NAD(+) + H(+) = 2 oxidized [2Fe-2S]-[ferredoxin] + NADH</text>
        <dbReference type="Rhea" id="RHEA:16521"/>
        <dbReference type="Rhea" id="RHEA-COMP:10000"/>
        <dbReference type="Rhea" id="RHEA-COMP:10001"/>
        <dbReference type="ChEBI" id="CHEBI:15378"/>
        <dbReference type="ChEBI" id="CHEBI:33737"/>
        <dbReference type="ChEBI" id="CHEBI:33738"/>
        <dbReference type="ChEBI" id="CHEBI:57540"/>
        <dbReference type="ChEBI" id="CHEBI:57945"/>
        <dbReference type="EC" id="1.18.1.3"/>
    </reaction>
</comment>
<comment type="cofactor">
    <cofactor>
        <name>FAD</name>
        <dbReference type="ChEBI" id="CHEBI:57692"/>
    </cofactor>
</comment>
<comment type="cofactor">
    <cofactor>
        <name>Mg(2+)</name>
        <dbReference type="ChEBI" id="CHEBI:18420"/>
    </cofactor>
</comment>
<sequence>TXIVIIGGGPGGYEAA</sequence>
<keyword id="KW-0903">Direct protein sequencing</keyword>
<keyword id="KW-0274">FAD</keyword>
<keyword id="KW-0285">Flavoprotein</keyword>
<keyword id="KW-0460">Magnesium</keyword>
<keyword id="KW-0520">NAD</keyword>
<keyword id="KW-0560">Oxidoreductase</keyword>
<proteinExistence type="evidence at protein level"/>
<feature type="chain" id="PRO_0000167645" description="Ferredoxin--NAD(+) reductase">
    <location>
        <begin position="1"/>
        <end position="16" status="greater than"/>
    </location>
</feature>
<feature type="non-terminal residue">
    <location>
        <position position="16"/>
    </location>
</feature>
<reference key="1">
    <citation type="journal article" date="1991" name="J. Bacteriol.">
        <title>Purification and characterization of a soybean flour-inducible ferredoxin reductase of Streptomyces griseus.</title>
        <authorList>
            <person name="Ramachandra M."/>
            <person name="Seetharam R."/>
            <person name="Emptage M.H."/>
            <person name="Sariaslani F.S."/>
        </authorList>
    </citation>
    <scope>PROTEIN SEQUENCE</scope>
</reference>